<sequence length="217" mass="25317">MAQKINPLGFRLGVTQNDRSHWFAQQRNYSKDLREDQKIRTCIENYVRTHIKSSSNYGGIARVEIRRKIDLIQVKIYIGFPNLLLIEGRGQGIEKLRNDVLNMLDSADRKLHIAIEKVAKPYRKPNILAEYIALQLEKRVPFRKTMKKAIELAEREEVEGIQIQIAGRLDGKEIARVEWDRGGRVPLQTIRARIDYCYYPVQTIYGVLGIKIWILEE</sequence>
<keyword id="KW-0150">Chloroplast</keyword>
<keyword id="KW-0934">Plastid</keyword>
<keyword id="KW-0687">Ribonucleoprotein</keyword>
<keyword id="KW-0689">Ribosomal protein</keyword>
<keyword id="KW-0694">RNA-binding</keyword>
<keyword id="KW-0699">rRNA-binding</keyword>
<comment type="subunit">
    <text evidence="1">Part of the 30S ribosomal subunit.</text>
</comment>
<comment type="subcellular location">
    <subcellularLocation>
        <location>Plastid</location>
        <location>Chloroplast</location>
    </subcellularLocation>
</comment>
<comment type="similarity">
    <text evidence="2">Belongs to the universal ribosomal protein uS3 family.</text>
</comment>
<gene>
    <name type="primary">rps3</name>
</gene>
<reference key="1">
    <citation type="submission" date="2003-02" db="EMBL/GenBank/DDBJ databases">
        <title>Complete nucleotide sequence of Pinus koraiensis.</title>
        <authorList>
            <person name="Noh E.W."/>
            <person name="Lee J.S."/>
            <person name="Choi Y.I."/>
            <person name="Han M.S."/>
            <person name="Yi Y.S."/>
            <person name="Han S.U."/>
        </authorList>
    </citation>
    <scope>NUCLEOTIDE SEQUENCE [LARGE SCALE GENOMIC DNA]</scope>
    <source>
        <strain>KangWon16</strain>
    </source>
</reference>
<feature type="chain" id="PRO_0000130300" description="Small ribosomal subunit protein uS3c">
    <location>
        <begin position="1"/>
        <end position="217"/>
    </location>
</feature>
<feature type="domain" description="KH type-2">
    <location>
        <begin position="47"/>
        <end position="119"/>
    </location>
</feature>
<protein>
    <recommendedName>
        <fullName evidence="2">Small ribosomal subunit protein uS3c</fullName>
    </recommendedName>
    <alternativeName>
        <fullName>30S ribosomal protein S3, chloroplastic</fullName>
    </alternativeName>
</protein>
<evidence type="ECO:0000250" key="1"/>
<evidence type="ECO:0000305" key="2"/>
<geneLocation type="chloroplast"/>
<accession>Q85WZ0</accession>
<organism>
    <name type="scientific">Pinus koraiensis</name>
    <name type="common">Korean pine</name>
    <dbReference type="NCBI Taxonomy" id="88728"/>
    <lineage>
        <taxon>Eukaryota</taxon>
        <taxon>Viridiplantae</taxon>
        <taxon>Streptophyta</taxon>
        <taxon>Embryophyta</taxon>
        <taxon>Tracheophyta</taxon>
        <taxon>Spermatophyta</taxon>
        <taxon>Pinopsida</taxon>
        <taxon>Pinidae</taxon>
        <taxon>Conifers I</taxon>
        <taxon>Pinales</taxon>
        <taxon>Pinaceae</taxon>
        <taxon>Pinus</taxon>
        <taxon>Pinus subgen. Strobus</taxon>
    </lineage>
</organism>
<dbReference type="EMBL" id="AY228468">
    <property type="protein sequence ID" value="AAO74079.1"/>
    <property type="molecule type" value="Genomic_DNA"/>
</dbReference>
<dbReference type="RefSeq" id="NP_817232.1">
    <property type="nucleotide sequence ID" value="NC_004677.2"/>
</dbReference>
<dbReference type="SMR" id="Q85WZ0"/>
<dbReference type="GeneID" id="806946"/>
<dbReference type="GO" id="GO:0009507">
    <property type="term" value="C:chloroplast"/>
    <property type="evidence" value="ECO:0007669"/>
    <property type="project" value="UniProtKB-SubCell"/>
</dbReference>
<dbReference type="GO" id="GO:0022627">
    <property type="term" value="C:cytosolic small ribosomal subunit"/>
    <property type="evidence" value="ECO:0007669"/>
    <property type="project" value="TreeGrafter"/>
</dbReference>
<dbReference type="GO" id="GO:0019843">
    <property type="term" value="F:rRNA binding"/>
    <property type="evidence" value="ECO:0007669"/>
    <property type="project" value="UniProtKB-UniRule"/>
</dbReference>
<dbReference type="GO" id="GO:0003735">
    <property type="term" value="F:structural constituent of ribosome"/>
    <property type="evidence" value="ECO:0007669"/>
    <property type="project" value="InterPro"/>
</dbReference>
<dbReference type="GO" id="GO:0006412">
    <property type="term" value="P:translation"/>
    <property type="evidence" value="ECO:0007669"/>
    <property type="project" value="UniProtKB-UniRule"/>
</dbReference>
<dbReference type="CDD" id="cd02412">
    <property type="entry name" value="KH-II_30S_S3"/>
    <property type="match status" value="1"/>
</dbReference>
<dbReference type="Gene3D" id="3.30.300.20">
    <property type="match status" value="1"/>
</dbReference>
<dbReference type="Gene3D" id="3.30.1140.32">
    <property type="entry name" value="Ribosomal protein S3, C-terminal domain"/>
    <property type="match status" value="1"/>
</dbReference>
<dbReference type="HAMAP" id="MF_01309_B">
    <property type="entry name" value="Ribosomal_uS3_B"/>
    <property type="match status" value="1"/>
</dbReference>
<dbReference type="InterPro" id="IPR015946">
    <property type="entry name" value="KH_dom-like_a/b"/>
</dbReference>
<dbReference type="InterPro" id="IPR004044">
    <property type="entry name" value="KH_dom_type_2"/>
</dbReference>
<dbReference type="InterPro" id="IPR009019">
    <property type="entry name" value="KH_sf_prok-type"/>
</dbReference>
<dbReference type="InterPro" id="IPR036419">
    <property type="entry name" value="Ribosomal_S3_C_sf"/>
</dbReference>
<dbReference type="InterPro" id="IPR005704">
    <property type="entry name" value="Ribosomal_uS3_bac-typ"/>
</dbReference>
<dbReference type="InterPro" id="IPR001351">
    <property type="entry name" value="Ribosomal_uS3_C"/>
</dbReference>
<dbReference type="InterPro" id="IPR018280">
    <property type="entry name" value="Ribosomal_uS3_CS"/>
</dbReference>
<dbReference type="NCBIfam" id="TIGR01009">
    <property type="entry name" value="rpsC_bact"/>
    <property type="match status" value="1"/>
</dbReference>
<dbReference type="PANTHER" id="PTHR11760">
    <property type="entry name" value="30S/40S RIBOSOMAL PROTEIN S3"/>
    <property type="match status" value="1"/>
</dbReference>
<dbReference type="PANTHER" id="PTHR11760:SF19">
    <property type="entry name" value="SMALL RIBOSOMAL SUBUNIT PROTEIN US3C"/>
    <property type="match status" value="1"/>
</dbReference>
<dbReference type="Pfam" id="PF00189">
    <property type="entry name" value="Ribosomal_S3_C"/>
    <property type="match status" value="1"/>
</dbReference>
<dbReference type="SUPFAM" id="SSF54814">
    <property type="entry name" value="Prokaryotic type KH domain (KH-domain type II)"/>
    <property type="match status" value="1"/>
</dbReference>
<dbReference type="SUPFAM" id="SSF54821">
    <property type="entry name" value="Ribosomal protein S3 C-terminal domain"/>
    <property type="match status" value="1"/>
</dbReference>
<dbReference type="PROSITE" id="PS50823">
    <property type="entry name" value="KH_TYPE_2"/>
    <property type="match status" value="1"/>
</dbReference>
<dbReference type="PROSITE" id="PS00548">
    <property type="entry name" value="RIBOSOMAL_S3"/>
    <property type="match status" value="1"/>
</dbReference>
<name>RR3_PINKO</name>
<proteinExistence type="inferred from homology"/>